<dbReference type="EMBL" id="AF051989">
    <property type="protein sequence ID" value="AAF21694.1"/>
    <property type="molecule type" value="Genomic_DNA"/>
</dbReference>
<dbReference type="GO" id="GO:0009507">
    <property type="term" value="C:chloroplast"/>
    <property type="evidence" value="ECO:0007669"/>
    <property type="project" value="UniProtKB-UniRule"/>
</dbReference>
<dbReference type="GO" id="GO:0003723">
    <property type="term" value="F:RNA binding"/>
    <property type="evidence" value="ECO:0007669"/>
    <property type="project" value="UniProtKB-KW"/>
</dbReference>
<dbReference type="GO" id="GO:0006397">
    <property type="term" value="P:mRNA processing"/>
    <property type="evidence" value="ECO:0007669"/>
    <property type="project" value="UniProtKB-KW"/>
</dbReference>
<dbReference type="GO" id="GO:0008380">
    <property type="term" value="P:RNA splicing"/>
    <property type="evidence" value="ECO:0007669"/>
    <property type="project" value="UniProtKB-UniRule"/>
</dbReference>
<dbReference type="GO" id="GO:0008033">
    <property type="term" value="P:tRNA processing"/>
    <property type="evidence" value="ECO:0007669"/>
    <property type="project" value="UniProtKB-KW"/>
</dbReference>
<dbReference type="HAMAP" id="MF_01390">
    <property type="entry name" value="MatK"/>
    <property type="match status" value="1"/>
</dbReference>
<dbReference type="InterPro" id="IPR024937">
    <property type="entry name" value="Domain_X"/>
</dbReference>
<dbReference type="InterPro" id="IPR002866">
    <property type="entry name" value="Maturase_MatK"/>
</dbReference>
<dbReference type="InterPro" id="IPR024942">
    <property type="entry name" value="Maturase_MatK_N"/>
</dbReference>
<dbReference type="PANTHER" id="PTHR34811">
    <property type="entry name" value="MATURASE K"/>
    <property type="match status" value="1"/>
</dbReference>
<dbReference type="PANTHER" id="PTHR34811:SF1">
    <property type="entry name" value="MATURASE K"/>
    <property type="match status" value="1"/>
</dbReference>
<dbReference type="Pfam" id="PF01348">
    <property type="entry name" value="Intron_maturas2"/>
    <property type="match status" value="1"/>
</dbReference>
<dbReference type="Pfam" id="PF01824">
    <property type="entry name" value="MatK_N"/>
    <property type="match status" value="1"/>
</dbReference>
<protein>
    <recommendedName>
        <fullName evidence="1">Maturase K</fullName>
    </recommendedName>
    <alternativeName>
        <fullName evidence="1">Intron maturase</fullName>
    </alternativeName>
</protein>
<name>MATK_LATCL</name>
<gene>
    <name evidence="1" type="primary">matK</name>
</gene>
<evidence type="ECO:0000255" key="1">
    <source>
        <dbReference type="HAMAP-Rule" id="MF_01390"/>
    </source>
</evidence>
<proteinExistence type="inferred from homology"/>
<comment type="function">
    <text evidence="1">Usually encoded in the trnK tRNA gene intron. Probably assists in splicing its own and other chloroplast group II introns.</text>
</comment>
<comment type="subcellular location">
    <subcellularLocation>
        <location>Plastid</location>
    </subcellularLocation>
</comment>
<comment type="similarity">
    <text evidence="1">Belongs to the intron maturase 2 family. MatK subfamily.</text>
</comment>
<keyword id="KW-0507">mRNA processing</keyword>
<keyword id="KW-0934">Plastid</keyword>
<keyword id="KW-0694">RNA-binding</keyword>
<keyword id="KW-0819">tRNA processing</keyword>
<accession>Q9TIR8</accession>
<feature type="chain" id="PRO_0000143457" description="Maturase K">
    <location>
        <begin position="1"/>
        <end position="511"/>
    </location>
</feature>
<reference key="1">
    <citation type="journal article" date="1999" name="Ann. Mo. Bot. Gard.">
        <title>The evolution of parasitism in Scrophulariaceae/Orobanchaceae: plastid gene sequences refute an evolutionary transition series.</title>
        <authorList>
            <person name="Young N.D."/>
            <person name="Steiner K.E."/>
            <person name="dePamphilis C.W."/>
        </authorList>
    </citation>
    <scope>NUCLEOTIDE SEQUENCE [GENOMIC DNA]</scope>
</reference>
<organism>
    <name type="scientific">Lathraea clandestina</name>
    <name type="common">Purple toothwort</name>
    <dbReference type="NCBI Taxonomy" id="41911"/>
    <lineage>
        <taxon>Eukaryota</taxon>
        <taxon>Viridiplantae</taxon>
        <taxon>Streptophyta</taxon>
        <taxon>Embryophyta</taxon>
        <taxon>Tracheophyta</taxon>
        <taxon>Spermatophyta</taxon>
        <taxon>Magnoliopsida</taxon>
        <taxon>eudicotyledons</taxon>
        <taxon>Gunneridae</taxon>
        <taxon>Pentapetalae</taxon>
        <taxon>asterids</taxon>
        <taxon>lamiids</taxon>
        <taxon>Lamiales</taxon>
        <taxon>Orobanchaceae</taxon>
        <taxon>Rhinantheae</taxon>
        <taxon>Lathraea</taxon>
    </lineage>
</organism>
<sequence>MEQIRRYLQLERFQQHDFLYPXFFQEYIYVFAHGRGFSRSIWSENENTGYDNKSSLRVMKRLITRMYQQNNFIILPNDFNKKNPFLAKKKFFYSQIIAEGFAFIVEIPFSLRFISYLEGKKKIVKSQNLRSIHSIFPFLEDNFSHLNFVLDILILHPVHVEILVQILRYWVKDASSLHLLRFFLNKYWNSLITPNKASSSLSKKNKRLFVFLYNSHVGGYESSFVFIRNQSSHLGSTPFGVLLERIYFYGKIERLVNVFVKVKDFRTNLWFVKEPYIHYIRYQRKWILASKGTFLFVKKWKCYLIIFWQWHFSLWFYPRRIYINQLSNHYFEFLGYLSNLRMTPSVVRSQSLENTFIINNAIKKIDNFVPIISMIASLAKAKFCNVFGHPISKPVRADLSDSNIIDQFGCICRKFFHYYSGSSKKKSLYRIKYILRLACARTLARKHKSTVRTFLKRLGSELLEEFLLSEEDVLFLTFPKASSSLQGVYRSRIWYLDIIYINDLVDHKYKL</sequence>
<geneLocation type="non-photosynthetic plastid"/>